<keyword id="KW-0963">Cytoplasm</keyword>
<keyword id="KW-0312">Gluconeogenesis</keyword>
<keyword id="KW-0324">Glycolysis</keyword>
<keyword id="KW-0413">Isomerase</keyword>
<sequence>MARKPLIAGNWKMNLNHFEAIALVQKIAFSLPDKYFDKVDVTVIPPFTDLRSVQTLVDGDKLRLSYGAQDVSQHDSGAYTGEISGAFLAKLGCSFAVVGHSERRTYHHEDDALVAAKAAAAFRHGITPIVCIGEHLKVREAGNHVEHNVEQLRGSLAGLTSEQIGQAVIAYEPVWAIGTGRVAGAADAQEVCKAIRDELGKLSSPQLAAGIRVLYGGSVNAKNVGEIVAQEDVDGALVGGASLDGEQFATLSAIAAGGPLP</sequence>
<proteinExistence type="inferred from homology"/>
<feature type="chain" id="PRO_0000307505" description="Triosephosphate isomerase">
    <location>
        <begin position="1"/>
        <end position="261"/>
    </location>
</feature>
<feature type="active site" description="Electrophile" evidence="1">
    <location>
        <position position="100"/>
    </location>
</feature>
<feature type="active site" description="Proton acceptor" evidence="1">
    <location>
        <position position="172"/>
    </location>
</feature>
<feature type="binding site" evidence="1">
    <location>
        <begin position="10"/>
        <end position="12"/>
    </location>
    <ligand>
        <name>substrate</name>
    </ligand>
</feature>
<feature type="binding site" evidence="1">
    <location>
        <position position="178"/>
    </location>
    <ligand>
        <name>substrate</name>
    </ligand>
</feature>
<feature type="binding site" evidence="1">
    <location>
        <position position="218"/>
    </location>
    <ligand>
        <name>substrate</name>
    </ligand>
</feature>
<feature type="binding site" evidence="1">
    <location>
        <begin position="239"/>
        <end position="240"/>
    </location>
    <ligand>
        <name>substrate</name>
    </ligand>
</feature>
<gene>
    <name evidence="1" type="primary">tpiA</name>
    <name type="ordered locus">Mjls_2446</name>
</gene>
<comment type="function">
    <text evidence="1">Involved in the gluconeogenesis. Catalyzes stereospecifically the conversion of dihydroxyacetone phosphate (DHAP) to D-glyceraldehyde-3-phosphate (G3P).</text>
</comment>
<comment type="catalytic activity">
    <reaction evidence="1">
        <text>D-glyceraldehyde 3-phosphate = dihydroxyacetone phosphate</text>
        <dbReference type="Rhea" id="RHEA:18585"/>
        <dbReference type="ChEBI" id="CHEBI:57642"/>
        <dbReference type="ChEBI" id="CHEBI:59776"/>
        <dbReference type="EC" id="5.3.1.1"/>
    </reaction>
</comment>
<comment type="pathway">
    <text evidence="1">Carbohydrate biosynthesis; gluconeogenesis.</text>
</comment>
<comment type="pathway">
    <text evidence="1">Carbohydrate degradation; glycolysis; D-glyceraldehyde 3-phosphate from glycerone phosphate: step 1/1.</text>
</comment>
<comment type="subunit">
    <text evidence="1">Homodimer.</text>
</comment>
<comment type="subcellular location">
    <subcellularLocation>
        <location evidence="1">Cytoplasm</location>
    </subcellularLocation>
</comment>
<comment type="similarity">
    <text evidence="1">Belongs to the triosephosphate isomerase family.</text>
</comment>
<name>TPIS_MYCSJ</name>
<protein>
    <recommendedName>
        <fullName evidence="1">Triosephosphate isomerase</fullName>
        <shortName evidence="1">TIM</shortName>
        <shortName evidence="1">TPI</shortName>
        <ecNumber evidence="1">5.3.1.1</ecNumber>
    </recommendedName>
    <alternativeName>
        <fullName evidence="1">Triose-phosphate isomerase</fullName>
    </alternativeName>
</protein>
<evidence type="ECO:0000255" key="1">
    <source>
        <dbReference type="HAMAP-Rule" id="MF_00147"/>
    </source>
</evidence>
<accession>A3PZA3</accession>
<reference key="1">
    <citation type="submission" date="2007-02" db="EMBL/GenBank/DDBJ databases">
        <title>Complete sequence of Mycobacterium sp. JLS.</title>
        <authorList>
            <consortium name="US DOE Joint Genome Institute"/>
            <person name="Copeland A."/>
            <person name="Lucas S."/>
            <person name="Lapidus A."/>
            <person name="Barry K."/>
            <person name="Detter J.C."/>
            <person name="Glavina del Rio T."/>
            <person name="Hammon N."/>
            <person name="Israni S."/>
            <person name="Dalin E."/>
            <person name="Tice H."/>
            <person name="Pitluck S."/>
            <person name="Chain P."/>
            <person name="Malfatti S."/>
            <person name="Shin M."/>
            <person name="Vergez L."/>
            <person name="Schmutz J."/>
            <person name="Larimer F."/>
            <person name="Land M."/>
            <person name="Hauser L."/>
            <person name="Kyrpides N."/>
            <person name="Mikhailova N."/>
            <person name="Miller C.D."/>
            <person name="Anderson A.J."/>
            <person name="Sims R.C."/>
            <person name="Richardson P."/>
        </authorList>
    </citation>
    <scope>NUCLEOTIDE SEQUENCE [LARGE SCALE GENOMIC DNA]</scope>
    <source>
        <strain>JLS</strain>
    </source>
</reference>
<organism>
    <name type="scientific">Mycobacterium sp. (strain JLS)</name>
    <dbReference type="NCBI Taxonomy" id="164757"/>
    <lineage>
        <taxon>Bacteria</taxon>
        <taxon>Bacillati</taxon>
        <taxon>Actinomycetota</taxon>
        <taxon>Actinomycetes</taxon>
        <taxon>Mycobacteriales</taxon>
        <taxon>Mycobacteriaceae</taxon>
        <taxon>Mycobacterium</taxon>
    </lineage>
</organism>
<dbReference type="EC" id="5.3.1.1" evidence="1"/>
<dbReference type="EMBL" id="CP000580">
    <property type="protein sequence ID" value="ABN98230.1"/>
    <property type="molecule type" value="Genomic_DNA"/>
</dbReference>
<dbReference type="SMR" id="A3PZA3"/>
<dbReference type="KEGG" id="mjl:Mjls_2446"/>
<dbReference type="HOGENOM" id="CLU_024251_2_3_11"/>
<dbReference type="BioCyc" id="MSP164757:G1G8C-2465-MONOMER"/>
<dbReference type="UniPathway" id="UPA00109">
    <property type="reaction ID" value="UER00189"/>
</dbReference>
<dbReference type="UniPathway" id="UPA00138"/>
<dbReference type="GO" id="GO:0005829">
    <property type="term" value="C:cytosol"/>
    <property type="evidence" value="ECO:0007669"/>
    <property type="project" value="TreeGrafter"/>
</dbReference>
<dbReference type="GO" id="GO:0004807">
    <property type="term" value="F:triose-phosphate isomerase activity"/>
    <property type="evidence" value="ECO:0007669"/>
    <property type="project" value="UniProtKB-UniRule"/>
</dbReference>
<dbReference type="GO" id="GO:0006094">
    <property type="term" value="P:gluconeogenesis"/>
    <property type="evidence" value="ECO:0007669"/>
    <property type="project" value="UniProtKB-UniRule"/>
</dbReference>
<dbReference type="GO" id="GO:0046166">
    <property type="term" value="P:glyceraldehyde-3-phosphate biosynthetic process"/>
    <property type="evidence" value="ECO:0007669"/>
    <property type="project" value="TreeGrafter"/>
</dbReference>
<dbReference type="GO" id="GO:0019563">
    <property type="term" value="P:glycerol catabolic process"/>
    <property type="evidence" value="ECO:0007669"/>
    <property type="project" value="TreeGrafter"/>
</dbReference>
<dbReference type="GO" id="GO:0006096">
    <property type="term" value="P:glycolytic process"/>
    <property type="evidence" value="ECO:0007669"/>
    <property type="project" value="UniProtKB-UniRule"/>
</dbReference>
<dbReference type="CDD" id="cd00311">
    <property type="entry name" value="TIM"/>
    <property type="match status" value="1"/>
</dbReference>
<dbReference type="FunFam" id="3.20.20.70:FF:000020">
    <property type="entry name" value="Triosephosphate isomerase"/>
    <property type="match status" value="1"/>
</dbReference>
<dbReference type="Gene3D" id="3.20.20.70">
    <property type="entry name" value="Aldolase class I"/>
    <property type="match status" value="1"/>
</dbReference>
<dbReference type="HAMAP" id="MF_00147_B">
    <property type="entry name" value="TIM_B"/>
    <property type="match status" value="1"/>
</dbReference>
<dbReference type="InterPro" id="IPR013785">
    <property type="entry name" value="Aldolase_TIM"/>
</dbReference>
<dbReference type="InterPro" id="IPR035990">
    <property type="entry name" value="TIM_sf"/>
</dbReference>
<dbReference type="InterPro" id="IPR022896">
    <property type="entry name" value="TrioseP_Isoase_bac/euk"/>
</dbReference>
<dbReference type="InterPro" id="IPR000652">
    <property type="entry name" value="Triosephosphate_isomerase"/>
</dbReference>
<dbReference type="InterPro" id="IPR020861">
    <property type="entry name" value="Triosephosphate_isomerase_AS"/>
</dbReference>
<dbReference type="NCBIfam" id="TIGR00419">
    <property type="entry name" value="tim"/>
    <property type="match status" value="1"/>
</dbReference>
<dbReference type="PANTHER" id="PTHR21139">
    <property type="entry name" value="TRIOSEPHOSPHATE ISOMERASE"/>
    <property type="match status" value="1"/>
</dbReference>
<dbReference type="PANTHER" id="PTHR21139:SF42">
    <property type="entry name" value="TRIOSEPHOSPHATE ISOMERASE"/>
    <property type="match status" value="1"/>
</dbReference>
<dbReference type="Pfam" id="PF00121">
    <property type="entry name" value="TIM"/>
    <property type="match status" value="1"/>
</dbReference>
<dbReference type="SUPFAM" id="SSF51351">
    <property type="entry name" value="Triosephosphate isomerase (TIM)"/>
    <property type="match status" value="1"/>
</dbReference>
<dbReference type="PROSITE" id="PS00171">
    <property type="entry name" value="TIM_1"/>
    <property type="match status" value="1"/>
</dbReference>
<dbReference type="PROSITE" id="PS51440">
    <property type="entry name" value="TIM_2"/>
    <property type="match status" value="1"/>
</dbReference>